<keyword id="KW-0002">3D-structure</keyword>
<keyword id="KW-0479">Metal-binding</keyword>
<keyword id="KW-1185">Reference proteome</keyword>
<keyword id="KW-0687">Ribonucleoprotein</keyword>
<keyword id="KW-0689">Ribosomal protein</keyword>
<keyword id="KW-0862">Zinc</keyword>
<keyword id="KW-0863">Zinc-finger</keyword>
<comment type="similarity">
    <text evidence="2">Belongs to the eukaryotic ribosomal protein eL43 family.</text>
</comment>
<protein>
    <recommendedName>
        <fullName evidence="2">Large ribosomal subunit protein eL43</fullName>
    </recommendedName>
    <alternativeName>
        <fullName>60S ribosomal protein L37a</fullName>
    </alternativeName>
</protein>
<feature type="initiator methionine" description="Removed" evidence="1">
    <location>
        <position position="1"/>
    </location>
</feature>
<feature type="chain" id="PRO_0000139827" description="Large ribosomal subunit protein eL43">
    <location>
        <begin position="2"/>
        <end position="92"/>
    </location>
</feature>
<feature type="zinc finger region" description="C4-type">
    <location>
        <begin position="39"/>
        <end position="60"/>
    </location>
</feature>
<organism>
    <name type="scientific">Drosophila melanogaster</name>
    <name type="common">Fruit fly</name>
    <dbReference type="NCBI Taxonomy" id="7227"/>
    <lineage>
        <taxon>Eukaryota</taxon>
        <taxon>Metazoa</taxon>
        <taxon>Ecdysozoa</taxon>
        <taxon>Arthropoda</taxon>
        <taxon>Hexapoda</taxon>
        <taxon>Insecta</taxon>
        <taxon>Pterygota</taxon>
        <taxon>Neoptera</taxon>
        <taxon>Endopterygota</taxon>
        <taxon>Diptera</taxon>
        <taxon>Brachycera</taxon>
        <taxon>Muscomorpha</taxon>
        <taxon>Ephydroidea</taxon>
        <taxon>Drosophilidae</taxon>
        <taxon>Drosophila</taxon>
        <taxon>Sophophora</taxon>
    </lineage>
</organism>
<dbReference type="EMBL" id="AE014134">
    <property type="protein sequence ID" value="AAF52217.1"/>
    <property type="molecule type" value="Genomic_DNA"/>
</dbReference>
<dbReference type="EMBL" id="AE014134">
    <property type="protein sequence ID" value="AAN10530.1"/>
    <property type="molecule type" value="Genomic_DNA"/>
</dbReference>
<dbReference type="EMBL" id="AY071189">
    <property type="protein sequence ID" value="AAL48811.1"/>
    <property type="molecule type" value="mRNA"/>
</dbReference>
<dbReference type="EMBL" id="AY071725">
    <property type="protein sequence ID" value="AAL49347.1"/>
    <property type="molecule type" value="mRNA"/>
</dbReference>
<dbReference type="RefSeq" id="NP_001188691.1">
    <property type="nucleotide sequence ID" value="NM_001201762.1"/>
</dbReference>
<dbReference type="RefSeq" id="NP_524781.1">
    <property type="nucleotide sequence ID" value="NM_080042.4"/>
</dbReference>
<dbReference type="RefSeq" id="NP_723060.1">
    <property type="nucleotide sequence ID" value="NM_164628.3"/>
</dbReference>
<dbReference type="PDB" id="4V6W">
    <property type="method" value="EM"/>
    <property type="resolution" value="6.00 A"/>
    <property type="chains" value="Cp=1-92"/>
</dbReference>
<dbReference type="PDB" id="6XU6">
    <property type="method" value="EM"/>
    <property type="resolution" value="3.50 A"/>
    <property type="chains" value="Cp=2-92"/>
</dbReference>
<dbReference type="PDB" id="6XU7">
    <property type="method" value="EM"/>
    <property type="resolution" value="4.90 A"/>
    <property type="chains" value="Cp=2-92"/>
</dbReference>
<dbReference type="PDB" id="6XU8">
    <property type="method" value="EM"/>
    <property type="resolution" value="3.00 A"/>
    <property type="chains" value="Cp=2-92"/>
</dbReference>
<dbReference type="PDBsum" id="4V6W"/>
<dbReference type="PDBsum" id="6XU6"/>
<dbReference type="PDBsum" id="6XU7"/>
<dbReference type="PDBsum" id="6XU8"/>
<dbReference type="EMDB" id="EMD-10622"/>
<dbReference type="EMDB" id="EMD-10623"/>
<dbReference type="EMDB" id="EMD-10624"/>
<dbReference type="SMR" id="Q9VMU4"/>
<dbReference type="BioGRID" id="69275">
    <property type="interactions" value="93"/>
</dbReference>
<dbReference type="FunCoup" id="Q9VMU4">
    <property type="interactions" value="609"/>
</dbReference>
<dbReference type="IntAct" id="Q9VMU4">
    <property type="interactions" value="5"/>
</dbReference>
<dbReference type="STRING" id="7227.FBpp0291726"/>
<dbReference type="PaxDb" id="7227-FBpp0291726"/>
<dbReference type="DNASU" id="44783"/>
<dbReference type="EnsemblMetazoa" id="FBtr0079016">
    <property type="protein sequence ID" value="FBpp0078655"/>
    <property type="gene ID" value="FBgn0261608"/>
</dbReference>
<dbReference type="EnsemblMetazoa" id="FBtr0079017">
    <property type="protein sequence ID" value="FBpp0078656"/>
    <property type="gene ID" value="FBgn0261608"/>
</dbReference>
<dbReference type="EnsemblMetazoa" id="FBtr0302570">
    <property type="protein sequence ID" value="FBpp0291726"/>
    <property type="gene ID" value="FBgn0261608"/>
</dbReference>
<dbReference type="GeneID" id="44783"/>
<dbReference type="KEGG" id="dme:Dmel_CG5827"/>
<dbReference type="AGR" id="FB:FBgn0261608"/>
<dbReference type="CTD" id="6168"/>
<dbReference type="FlyBase" id="FBgn0261608">
    <property type="gene designation" value="RpL37A"/>
</dbReference>
<dbReference type="VEuPathDB" id="VectorBase:FBgn0261608"/>
<dbReference type="eggNOG" id="KOG0402">
    <property type="taxonomic scope" value="Eukaryota"/>
</dbReference>
<dbReference type="GeneTree" id="ENSGT00940000167978"/>
<dbReference type="HOGENOM" id="CLU_141199_1_0_1"/>
<dbReference type="InParanoid" id="Q9VMU4"/>
<dbReference type="OMA" id="GPRYGRK"/>
<dbReference type="OrthoDB" id="10258345at2759"/>
<dbReference type="PhylomeDB" id="Q9VMU4"/>
<dbReference type="SignaLink" id="Q9VMU4"/>
<dbReference type="ChiTaRS" id="RpL37a">
    <property type="organism name" value="fly"/>
</dbReference>
<dbReference type="GenomeRNAi" id="44783"/>
<dbReference type="PRO" id="PR:Q9VMU4"/>
<dbReference type="Proteomes" id="UP000000803">
    <property type="component" value="Chromosome 2L"/>
</dbReference>
<dbReference type="Bgee" id="FBgn0261608">
    <property type="expression patterns" value="Expressed in spermathecum and 290 other cell types or tissues"/>
</dbReference>
<dbReference type="ExpressionAtlas" id="Q9VMU4">
    <property type="expression patterns" value="baseline and differential"/>
</dbReference>
<dbReference type="GO" id="GO:0022625">
    <property type="term" value="C:cytosolic large ribosomal subunit"/>
    <property type="evidence" value="ECO:0000304"/>
    <property type="project" value="FlyBase"/>
</dbReference>
<dbReference type="GO" id="GO:0022626">
    <property type="term" value="C:cytosolic ribosome"/>
    <property type="evidence" value="ECO:0000314"/>
    <property type="project" value="FlyBase"/>
</dbReference>
<dbReference type="GO" id="GO:0003735">
    <property type="term" value="F:structural constituent of ribosome"/>
    <property type="evidence" value="ECO:0000314"/>
    <property type="project" value="FlyBase"/>
</dbReference>
<dbReference type="GO" id="GO:0008270">
    <property type="term" value="F:zinc ion binding"/>
    <property type="evidence" value="ECO:0007669"/>
    <property type="project" value="UniProtKB-KW"/>
</dbReference>
<dbReference type="GO" id="GO:0002181">
    <property type="term" value="P:cytoplasmic translation"/>
    <property type="evidence" value="ECO:0000304"/>
    <property type="project" value="FlyBase"/>
</dbReference>
<dbReference type="FunFam" id="2.20.25.30:FF:000002">
    <property type="entry name" value="60S ribosomal protein L37a"/>
    <property type="match status" value="1"/>
</dbReference>
<dbReference type="Gene3D" id="2.20.25.30">
    <property type="match status" value="1"/>
</dbReference>
<dbReference type="HAMAP" id="MF_00327">
    <property type="entry name" value="Ribosomal_eL43"/>
    <property type="match status" value="1"/>
</dbReference>
<dbReference type="InterPro" id="IPR011331">
    <property type="entry name" value="Ribosomal_eL37/eL43"/>
</dbReference>
<dbReference type="InterPro" id="IPR002674">
    <property type="entry name" value="Ribosomal_eL43"/>
</dbReference>
<dbReference type="InterPro" id="IPR050522">
    <property type="entry name" value="Ribosomal_protein_eL43"/>
</dbReference>
<dbReference type="InterPro" id="IPR011332">
    <property type="entry name" value="Ribosomal_zn-bd"/>
</dbReference>
<dbReference type="NCBIfam" id="TIGR00280">
    <property type="entry name" value="eL43_euk_arch"/>
    <property type="match status" value="1"/>
</dbReference>
<dbReference type="NCBIfam" id="NF003058">
    <property type="entry name" value="PRK03976.1"/>
    <property type="match status" value="1"/>
</dbReference>
<dbReference type="PANTHER" id="PTHR48129">
    <property type="entry name" value="60S RIBOSOMAL PROTEIN L37A"/>
    <property type="match status" value="1"/>
</dbReference>
<dbReference type="PANTHER" id="PTHR48129:SF1">
    <property type="entry name" value="LARGE RIBOSOMAL SUBUNIT PROTEIN EL43"/>
    <property type="match status" value="1"/>
</dbReference>
<dbReference type="Pfam" id="PF01780">
    <property type="entry name" value="Ribosomal_L37ae"/>
    <property type="match status" value="1"/>
</dbReference>
<dbReference type="SUPFAM" id="SSF57829">
    <property type="entry name" value="Zn-binding ribosomal proteins"/>
    <property type="match status" value="1"/>
</dbReference>
<evidence type="ECO:0000250" key="1"/>
<evidence type="ECO:0000305" key="2"/>
<sequence>MAKRTKKVGIVGKYGTRYGASLRKMVKKMEITQHSKYTCSFCGKDSMKRAVVGIWSCKRCKRTVAGGAWVYSTTAAASVRSAVRRLRETKEQ</sequence>
<name>RL37A_DROME</name>
<gene>
    <name type="primary">RpL37A</name>
    <name type="ORF">CG5827</name>
</gene>
<reference key="1">
    <citation type="journal article" date="2000" name="Science">
        <title>The genome sequence of Drosophila melanogaster.</title>
        <authorList>
            <person name="Adams M.D."/>
            <person name="Celniker S.E."/>
            <person name="Holt R.A."/>
            <person name="Evans C.A."/>
            <person name="Gocayne J.D."/>
            <person name="Amanatides P.G."/>
            <person name="Scherer S.E."/>
            <person name="Li P.W."/>
            <person name="Hoskins R.A."/>
            <person name="Galle R.F."/>
            <person name="George R.A."/>
            <person name="Lewis S.E."/>
            <person name="Richards S."/>
            <person name="Ashburner M."/>
            <person name="Henderson S.N."/>
            <person name="Sutton G.G."/>
            <person name="Wortman J.R."/>
            <person name="Yandell M.D."/>
            <person name="Zhang Q."/>
            <person name="Chen L.X."/>
            <person name="Brandon R.C."/>
            <person name="Rogers Y.-H.C."/>
            <person name="Blazej R.G."/>
            <person name="Champe M."/>
            <person name="Pfeiffer B.D."/>
            <person name="Wan K.H."/>
            <person name="Doyle C."/>
            <person name="Baxter E.G."/>
            <person name="Helt G."/>
            <person name="Nelson C.R."/>
            <person name="Miklos G.L.G."/>
            <person name="Abril J.F."/>
            <person name="Agbayani A."/>
            <person name="An H.-J."/>
            <person name="Andrews-Pfannkoch C."/>
            <person name="Baldwin D."/>
            <person name="Ballew R.M."/>
            <person name="Basu A."/>
            <person name="Baxendale J."/>
            <person name="Bayraktaroglu L."/>
            <person name="Beasley E.M."/>
            <person name="Beeson K.Y."/>
            <person name="Benos P.V."/>
            <person name="Berman B.P."/>
            <person name="Bhandari D."/>
            <person name="Bolshakov S."/>
            <person name="Borkova D."/>
            <person name="Botchan M.R."/>
            <person name="Bouck J."/>
            <person name="Brokstein P."/>
            <person name="Brottier P."/>
            <person name="Burtis K.C."/>
            <person name="Busam D.A."/>
            <person name="Butler H."/>
            <person name="Cadieu E."/>
            <person name="Center A."/>
            <person name="Chandra I."/>
            <person name="Cherry J.M."/>
            <person name="Cawley S."/>
            <person name="Dahlke C."/>
            <person name="Davenport L.B."/>
            <person name="Davies P."/>
            <person name="de Pablos B."/>
            <person name="Delcher A."/>
            <person name="Deng Z."/>
            <person name="Mays A.D."/>
            <person name="Dew I."/>
            <person name="Dietz S.M."/>
            <person name="Dodson K."/>
            <person name="Doup L.E."/>
            <person name="Downes M."/>
            <person name="Dugan-Rocha S."/>
            <person name="Dunkov B.C."/>
            <person name="Dunn P."/>
            <person name="Durbin K.J."/>
            <person name="Evangelista C.C."/>
            <person name="Ferraz C."/>
            <person name="Ferriera S."/>
            <person name="Fleischmann W."/>
            <person name="Fosler C."/>
            <person name="Gabrielian A.E."/>
            <person name="Garg N.S."/>
            <person name="Gelbart W.M."/>
            <person name="Glasser K."/>
            <person name="Glodek A."/>
            <person name="Gong F."/>
            <person name="Gorrell J.H."/>
            <person name="Gu Z."/>
            <person name="Guan P."/>
            <person name="Harris M."/>
            <person name="Harris N.L."/>
            <person name="Harvey D.A."/>
            <person name="Heiman T.J."/>
            <person name="Hernandez J.R."/>
            <person name="Houck J."/>
            <person name="Hostin D."/>
            <person name="Houston K.A."/>
            <person name="Howland T.J."/>
            <person name="Wei M.-H."/>
            <person name="Ibegwam C."/>
            <person name="Jalali M."/>
            <person name="Kalush F."/>
            <person name="Karpen G.H."/>
            <person name="Ke Z."/>
            <person name="Kennison J.A."/>
            <person name="Ketchum K.A."/>
            <person name="Kimmel B.E."/>
            <person name="Kodira C.D."/>
            <person name="Kraft C.L."/>
            <person name="Kravitz S."/>
            <person name="Kulp D."/>
            <person name="Lai Z."/>
            <person name="Lasko P."/>
            <person name="Lei Y."/>
            <person name="Levitsky A.A."/>
            <person name="Li J.H."/>
            <person name="Li Z."/>
            <person name="Liang Y."/>
            <person name="Lin X."/>
            <person name="Liu X."/>
            <person name="Mattei B."/>
            <person name="McIntosh T.C."/>
            <person name="McLeod M.P."/>
            <person name="McPherson D."/>
            <person name="Merkulov G."/>
            <person name="Milshina N.V."/>
            <person name="Mobarry C."/>
            <person name="Morris J."/>
            <person name="Moshrefi A."/>
            <person name="Mount S.M."/>
            <person name="Moy M."/>
            <person name="Murphy B."/>
            <person name="Murphy L."/>
            <person name="Muzny D.M."/>
            <person name="Nelson D.L."/>
            <person name="Nelson D.R."/>
            <person name="Nelson K.A."/>
            <person name="Nixon K."/>
            <person name="Nusskern D.R."/>
            <person name="Pacleb J.M."/>
            <person name="Palazzolo M."/>
            <person name="Pittman G.S."/>
            <person name="Pan S."/>
            <person name="Pollard J."/>
            <person name="Puri V."/>
            <person name="Reese M.G."/>
            <person name="Reinert K."/>
            <person name="Remington K."/>
            <person name="Saunders R.D.C."/>
            <person name="Scheeler F."/>
            <person name="Shen H."/>
            <person name="Shue B.C."/>
            <person name="Siden-Kiamos I."/>
            <person name="Simpson M."/>
            <person name="Skupski M.P."/>
            <person name="Smith T.J."/>
            <person name="Spier E."/>
            <person name="Spradling A.C."/>
            <person name="Stapleton M."/>
            <person name="Strong R."/>
            <person name="Sun E."/>
            <person name="Svirskas R."/>
            <person name="Tector C."/>
            <person name="Turner R."/>
            <person name="Venter E."/>
            <person name="Wang A.H."/>
            <person name="Wang X."/>
            <person name="Wang Z.-Y."/>
            <person name="Wassarman D.A."/>
            <person name="Weinstock G.M."/>
            <person name="Weissenbach J."/>
            <person name="Williams S.M."/>
            <person name="Woodage T."/>
            <person name="Worley K.C."/>
            <person name="Wu D."/>
            <person name="Yang S."/>
            <person name="Yao Q.A."/>
            <person name="Ye J."/>
            <person name="Yeh R.-F."/>
            <person name="Zaveri J.S."/>
            <person name="Zhan M."/>
            <person name="Zhang G."/>
            <person name="Zhao Q."/>
            <person name="Zheng L."/>
            <person name="Zheng X.H."/>
            <person name="Zhong F.N."/>
            <person name="Zhong W."/>
            <person name="Zhou X."/>
            <person name="Zhu S.C."/>
            <person name="Zhu X."/>
            <person name="Smith H.O."/>
            <person name="Gibbs R.A."/>
            <person name="Myers E.W."/>
            <person name="Rubin G.M."/>
            <person name="Venter J.C."/>
        </authorList>
    </citation>
    <scope>NUCLEOTIDE SEQUENCE [LARGE SCALE GENOMIC DNA]</scope>
    <source>
        <strain>Berkeley</strain>
    </source>
</reference>
<reference key="2">
    <citation type="journal article" date="2002" name="Genome Biol.">
        <title>Annotation of the Drosophila melanogaster euchromatic genome: a systematic review.</title>
        <authorList>
            <person name="Misra S."/>
            <person name="Crosby M.A."/>
            <person name="Mungall C.J."/>
            <person name="Matthews B.B."/>
            <person name="Campbell K.S."/>
            <person name="Hradecky P."/>
            <person name="Huang Y."/>
            <person name="Kaminker J.S."/>
            <person name="Millburn G.H."/>
            <person name="Prochnik S.E."/>
            <person name="Smith C.D."/>
            <person name="Tupy J.L."/>
            <person name="Whitfield E.J."/>
            <person name="Bayraktaroglu L."/>
            <person name="Berman B.P."/>
            <person name="Bettencourt B.R."/>
            <person name="Celniker S.E."/>
            <person name="de Grey A.D.N.J."/>
            <person name="Drysdale R.A."/>
            <person name="Harris N.L."/>
            <person name="Richter J."/>
            <person name="Russo S."/>
            <person name="Schroeder A.J."/>
            <person name="Shu S.Q."/>
            <person name="Stapleton M."/>
            <person name="Yamada C."/>
            <person name="Ashburner M."/>
            <person name="Gelbart W.M."/>
            <person name="Rubin G.M."/>
            <person name="Lewis S.E."/>
        </authorList>
    </citation>
    <scope>GENOME REANNOTATION</scope>
    <source>
        <strain>Berkeley</strain>
    </source>
</reference>
<reference key="3">
    <citation type="journal article" date="2002" name="Genome Biol.">
        <title>A Drosophila full-length cDNA resource.</title>
        <authorList>
            <person name="Stapleton M."/>
            <person name="Carlson J.W."/>
            <person name="Brokstein P."/>
            <person name="Yu C."/>
            <person name="Champe M."/>
            <person name="George R.A."/>
            <person name="Guarin H."/>
            <person name="Kronmiller B."/>
            <person name="Pacleb J.M."/>
            <person name="Park S."/>
            <person name="Wan K.H."/>
            <person name="Rubin G.M."/>
            <person name="Celniker S.E."/>
        </authorList>
    </citation>
    <scope>NUCLEOTIDE SEQUENCE [LARGE SCALE MRNA]</scope>
    <source>
        <strain>Berkeley</strain>
        <tissue>Embryo</tissue>
        <tissue>Head</tissue>
    </source>
</reference>
<reference key="4">
    <citation type="journal article" date="2013" name="Nature">
        <title>Structures of the human and Drosophila 80S ribosome.</title>
        <authorList>
            <person name="Anger A.M."/>
            <person name="Armache J.P."/>
            <person name="Berninghausen O."/>
            <person name="Habeck M."/>
            <person name="Subklewe M."/>
            <person name="Wilson D.N."/>
            <person name="Beckmann R."/>
        </authorList>
    </citation>
    <scope>STRUCTURE BY ELECTRON MICROSCOPY (6.0 ANGSTROMS) OF THE 80S RIBOSOME</scope>
</reference>
<accession>Q9VMU4</accession>
<accession>A4V081</accession>
<proteinExistence type="evidence at protein level"/>